<evidence type="ECO:0000255" key="1">
    <source>
        <dbReference type="HAMAP-Rule" id="MF_00540"/>
    </source>
</evidence>
<reference key="1">
    <citation type="journal article" date="2007" name="Proc. Natl. Acad. Sci. U.S.A.">
        <title>Genome plasticity of BCG and impact on vaccine efficacy.</title>
        <authorList>
            <person name="Brosch R."/>
            <person name="Gordon S.V."/>
            <person name="Garnier T."/>
            <person name="Eiglmeier K."/>
            <person name="Frigui W."/>
            <person name="Valenti P."/>
            <person name="Dos Santos S."/>
            <person name="Duthoy S."/>
            <person name="Lacroix C."/>
            <person name="Garcia-Pelayo C."/>
            <person name="Inwald J.K."/>
            <person name="Golby P."/>
            <person name="Garcia J.N."/>
            <person name="Hewinson R.G."/>
            <person name="Behr M.A."/>
            <person name="Quail M.A."/>
            <person name="Churcher C."/>
            <person name="Barrell B.G."/>
            <person name="Parkhill J."/>
            <person name="Cole S.T."/>
        </authorList>
    </citation>
    <scope>NUCLEOTIDE SEQUENCE [LARGE SCALE GENOMIC DNA]</scope>
    <source>
        <strain>BCG / Pasteur 1173P2</strain>
    </source>
</reference>
<protein>
    <recommendedName>
        <fullName evidence="1">Adenosine deaminase</fullName>
        <ecNumber evidence="1">3.5.4.4</ecNumber>
    </recommendedName>
    <alternativeName>
        <fullName evidence="1">Adenosine aminohydrolase</fullName>
    </alternativeName>
</protein>
<keyword id="KW-0378">Hydrolase</keyword>
<keyword id="KW-0479">Metal-binding</keyword>
<keyword id="KW-0546">Nucleotide metabolism</keyword>
<keyword id="KW-0862">Zinc</keyword>
<organism>
    <name type="scientific">Mycobacterium bovis (strain BCG / Pasteur 1173P2)</name>
    <dbReference type="NCBI Taxonomy" id="410289"/>
    <lineage>
        <taxon>Bacteria</taxon>
        <taxon>Bacillati</taxon>
        <taxon>Actinomycetota</taxon>
        <taxon>Actinomycetes</taxon>
        <taxon>Mycobacteriales</taxon>
        <taxon>Mycobacteriaceae</taxon>
        <taxon>Mycobacterium</taxon>
        <taxon>Mycobacterium tuberculosis complex</taxon>
    </lineage>
</organism>
<proteinExistence type="inferred from homology"/>
<name>ADD_MYCBP</name>
<accession>A1KP00</accession>
<dbReference type="EC" id="3.5.4.4" evidence="1"/>
<dbReference type="EMBL" id="AM408590">
    <property type="protein sequence ID" value="CAL73368.1"/>
    <property type="molecule type" value="Genomic_DNA"/>
</dbReference>
<dbReference type="RefSeq" id="WP_003417259.1">
    <property type="nucleotide sequence ID" value="NC_008769.1"/>
</dbReference>
<dbReference type="SMR" id="A1KP00"/>
<dbReference type="KEGG" id="mbb:BCG_3379c"/>
<dbReference type="HOGENOM" id="CLU_039228_0_0_11"/>
<dbReference type="Proteomes" id="UP000001472">
    <property type="component" value="Chromosome"/>
</dbReference>
<dbReference type="GO" id="GO:0005829">
    <property type="term" value="C:cytosol"/>
    <property type="evidence" value="ECO:0007669"/>
    <property type="project" value="TreeGrafter"/>
</dbReference>
<dbReference type="GO" id="GO:0046936">
    <property type="term" value="F:2'-deoxyadenosine deaminase activity"/>
    <property type="evidence" value="ECO:0007669"/>
    <property type="project" value="RHEA"/>
</dbReference>
<dbReference type="GO" id="GO:0004000">
    <property type="term" value="F:adenosine deaminase activity"/>
    <property type="evidence" value="ECO:0007669"/>
    <property type="project" value="UniProtKB-UniRule"/>
</dbReference>
<dbReference type="GO" id="GO:0008270">
    <property type="term" value="F:zinc ion binding"/>
    <property type="evidence" value="ECO:0007669"/>
    <property type="project" value="UniProtKB-UniRule"/>
</dbReference>
<dbReference type="GO" id="GO:0006154">
    <property type="term" value="P:adenosine catabolic process"/>
    <property type="evidence" value="ECO:0007669"/>
    <property type="project" value="TreeGrafter"/>
</dbReference>
<dbReference type="GO" id="GO:0043103">
    <property type="term" value="P:hypoxanthine salvage"/>
    <property type="evidence" value="ECO:0007669"/>
    <property type="project" value="TreeGrafter"/>
</dbReference>
<dbReference type="GO" id="GO:0046103">
    <property type="term" value="P:inosine biosynthetic process"/>
    <property type="evidence" value="ECO:0007669"/>
    <property type="project" value="TreeGrafter"/>
</dbReference>
<dbReference type="GO" id="GO:0009117">
    <property type="term" value="P:nucleotide metabolic process"/>
    <property type="evidence" value="ECO:0007669"/>
    <property type="project" value="UniProtKB-KW"/>
</dbReference>
<dbReference type="GO" id="GO:0009168">
    <property type="term" value="P:purine ribonucleoside monophosphate biosynthetic process"/>
    <property type="evidence" value="ECO:0007669"/>
    <property type="project" value="UniProtKB-UniRule"/>
</dbReference>
<dbReference type="FunFam" id="3.20.20.140:FF:000020">
    <property type="entry name" value="Adenosine deaminase"/>
    <property type="match status" value="1"/>
</dbReference>
<dbReference type="Gene3D" id="3.20.20.140">
    <property type="entry name" value="Metal-dependent hydrolases"/>
    <property type="match status" value="1"/>
</dbReference>
<dbReference type="HAMAP" id="MF_00540">
    <property type="entry name" value="A_deaminase"/>
    <property type="match status" value="1"/>
</dbReference>
<dbReference type="InterPro" id="IPR028893">
    <property type="entry name" value="A_deaminase"/>
</dbReference>
<dbReference type="InterPro" id="IPR001365">
    <property type="entry name" value="A_deaminase_dom"/>
</dbReference>
<dbReference type="InterPro" id="IPR006330">
    <property type="entry name" value="Ado/ade_deaminase"/>
</dbReference>
<dbReference type="InterPro" id="IPR032466">
    <property type="entry name" value="Metal_Hydrolase"/>
</dbReference>
<dbReference type="NCBIfam" id="TIGR01430">
    <property type="entry name" value="aden_deam"/>
    <property type="match status" value="1"/>
</dbReference>
<dbReference type="NCBIfam" id="NF006847">
    <property type="entry name" value="PRK09358.1-2"/>
    <property type="match status" value="1"/>
</dbReference>
<dbReference type="PANTHER" id="PTHR11409">
    <property type="entry name" value="ADENOSINE DEAMINASE"/>
    <property type="match status" value="1"/>
</dbReference>
<dbReference type="PANTHER" id="PTHR11409:SF43">
    <property type="entry name" value="ADENOSINE DEAMINASE"/>
    <property type="match status" value="1"/>
</dbReference>
<dbReference type="Pfam" id="PF00962">
    <property type="entry name" value="A_deaminase"/>
    <property type="match status" value="1"/>
</dbReference>
<dbReference type="SUPFAM" id="SSF51556">
    <property type="entry name" value="Metallo-dependent hydrolases"/>
    <property type="match status" value="1"/>
</dbReference>
<gene>
    <name evidence="1" type="primary">add</name>
    <name type="ordered locus">BCG_3379c</name>
</gene>
<sequence>MTAAPTLQTIRLAPKALLHDHLDGGLRPATVLDIAGQVGYDDLPATDVDALASWFRTQSHSGSLERYLEPFSHTVAVMQTPEALYRVAFECAQDLAADSVVYAEVRFAPELHISCGLSFDDVVDTVLTGFAAGEKACAADGQPITVRCLVTAMRHAAMSREIAELAIRFRDKGVVGFDIAGAEAGHPPTRHLDAFEYMRDHNARFTIHAGEAFGLPSIHEAIAFCGADRLGHGVRIVDDIDVDADGGFQLGRLAAILRDKRIPLELCPSSNVQTGAVASIAEHPFDLLARARFRVTVNTDNRLMSDTSMSLEMHRLVEAFGYGWSDLARFTVNAMKSAFIPFDQRLAIIDEVIKPRFAALMGHSE</sequence>
<feature type="chain" id="PRO_1000017668" description="Adenosine deaminase">
    <location>
        <begin position="1"/>
        <end position="365"/>
    </location>
</feature>
<feature type="active site" description="Proton donor" evidence="1">
    <location>
        <position position="211"/>
    </location>
</feature>
<feature type="binding site" evidence="1">
    <location>
        <position position="19"/>
    </location>
    <ligand>
        <name>Zn(2+)</name>
        <dbReference type="ChEBI" id="CHEBI:29105"/>
        <note>catalytic</note>
    </ligand>
</feature>
<feature type="binding site" evidence="1">
    <location>
        <position position="21"/>
    </location>
    <ligand>
        <name>substrate</name>
    </ligand>
</feature>
<feature type="binding site" evidence="1">
    <location>
        <position position="21"/>
    </location>
    <ligand>
        <name>Zn(2+)</name>
        <dbReference type="ChEBI" id="CHEBI:29105"/>
        <note>catalytic</note>
    </ligand>
</feature>
<feature type="binding site" evidence="1">
    <location>
        <position position="23"/>
    </location>
    <ligand>
        <name>substrate</name>
    </ligand>
</feature>
<feature type="binding site" evidence="1">
    <location>
        <position position="181"/>
    </location>
    <ligand>
        <name>substrate</name>
    </ligand>
</feature>
<feature type="binding site" evidence="1">
    <location>
        <position position="208"/>
    </location>
    <ligand>
        <name>Zn(2+)</name>
        <dbReference type="ChEBI" id="CHEBI:29105"/>
        <note>catalytic</note>
    </ligand>
</feature>
<feature type="binding site" evidence="1">
    <location>
        <position position="300"/>
    </location>
    <ligand>
        <name>Zn(2+)</name>
        <dbReference type="ChEBI" id="CHEBI:29105"/>
        <note>catalytic</note>
    </ligand>
</feature>
<feature type="site" description="Important for catalytic activity" evidence="1">
    <location>
        <position position="232"/>
    </location>
</feature>
<comment type="function">
    <text evidence="1">Catalyzes the hydrolytic deamination of adenosine and 2-deoxyadenosine.</text>
</comment>
<comment type="catalytic activity">
    <reaction evidence="1">
        <text>adenosine + H2O + H(+) = inosine + NH4(+)</text>
        <dbReference type="Rhea" id="RHEA:24408"/>
        <dbReference type="ChEBI" id="CHEBI:15377"/>
        <dbReference type="ChEBI" id="CHEBI:15378"/>
        <dbReference type="ChEBI" id="CHEBI:16335"/>
        <dbReference type="ChEBI" id="CHEBI:17596"/>
        <dbReference type="ChEBI" id="CHEBI:28938"/>
        <dbReference type="EC" id="3.5.4.4"/>
    </reaction>
    <physiologicalReaction direction="left-to-right" evidence="1">
        <dbReference type="Rhea" id="RHEA:24409"/>
    </physiologicalReaction>
</comment>
<comment type="catalytic activity">
    <reaction evidence="1">
        <text>2'-deoxyadenosine + H2O + H(+) = 2'-deoxyinosine + NH4(+)</text>
        <dbReference type="Rhea" id="RHEA:28190"/>
        <dbReference type="ChEBI" id="CHEBI:15377"/>
        <dbReference type="ChEBI" id="CHEBI:15378"/>
        <dbReference type="ChEBI" id="CHEBI:17256"/>
        <dbReference type="ChEBI" id="CHEBI:28938"/>
        <dbReference type="ChEBI" id="CHEBI:28997"/>
        <dbReference type="EC" id="3.5.4.4"/>
    </reaction>
    <physiologicalReaction direction="left-to-right" evidence="1">
        <dbReference type="Rhea" id="RHEA:28191"/>
    </physiologicalReaction>
</comment>
<comment type="cofactor">
    <cofactor evidence="1">
        <name>Zn(2+)</name>
        <dbReference type="ChEBI" id="CHEBI:29105"/>
    </cofactor>
    <text evidence="1">Binds 1 zinc ion per subunit.</text>
</comment>
<comment type="similarity">
    <text evidence="1">Belongs to the metallo-dependent hydrolases superfamily. Adenosine and AMP deaminases family. Adenosine deaminase subfamily.</text>
</comment>